<keyword id="KW-0249">Electron transport</keyword>
<keyword id="KW-0349">Heme</keyword>
<keyword id="KW-0408">Iron</keyword>
<keyword id="KW-0472">Membrane</keyword>
<keyword id="KW-0479">Metal-binding</keyword>
<keyword id="KW-0496">Mitochondrion</keyword>
<keyword id="KW-0999">Mitochondrion inner membrane</keyword>
<keyword id="KW-0679">Respiratory chain</keyword>
<keyword id="KW-0812">Transmembrane</keyword>
<keyword id="KW-1133">Transmembrane helix</keyword>
<keyword id="KW-0813">Transport</keyword>
<keyword id="KW-0830">Ubiquinone</keyword>
<name>CYB_ATRMI</name>
<proteinExistence type="inferred from homology"/>
<sequence length="214" mass="24060">SINYXNMSNHHMLSTFNLLPVGSNISTWWNFGSMLMTCLALQTITGFFLAIHYTANINLAFSSIMHITRDIPYGWIMQNLHAIGASMFFVCIYIHIARGIYYGSYLNKEVWLSGVILLTALMATAFFGYVLPWGQMSFWAATVITNLLTAIPYLGTMLTTWLWGGFSINDPTLTRFFALHFVLPFIIISMSSIHIILLHNEGSSNPLGTNSDID</sequence>
<gene>
    <name type="primary">MT-CYB</name>
    <name type="synonym">COB</name>
    <name type="synonym">CYTB</name>
    <name type="synonym">MTCYB</name>
</gene>
<accession>P87421</accession>
<reference key="1">
    <citation type="journal article" date="1998" name="Mol. Phylogenet. Evol.">
        <title>Weighting and congruence: a case study based on three mitochondrial genes in pitvipers.</title>
        <authorList>
            <person name="Vidal N."/>
            <person name="Lecointre G."/>
        </authorList>
    </citation>
    <scope>NUCLEOTIDE SEQUENCE [GENOMIC DNA]</scope>
</reference>
<reference key="2">
    <citation type="journal article" date="1997" name="C. R. Acad. Sci. III, Sci. Vie">
        <title>Molecular systematics of pitvipers: paraphyly of the Bothrops complex.</title>
        <authorList>
            <person name="Vidal N."/>
            <person name="Lecointre G."/>
            <person name="Vie J.-C."/>
            <person name="Gasc J.-P."/>
        </authorList>
    </citation>
    <scope>NUCLEOTIDE SEQUENCE [GENOMIC DNA] OF 1-132</scope>
</reference>
<protein>
    <recommendedName>
        <fullName>Cytochrome b</fullName>
    </recommendedName>
    <alternativeName>
        <fullName>Complex III subunit 3</fullName>
    </alternativeName>
    <alternativeName>
        <fullName>Complex III subunit III</fullName>
    </alternativeName>
    <alternativeName>
        <fullName>Cytochrome b-c1 complex subunit 3</fullName>
    </alternativeName>
    <alternativeName>
        <fullName>Ubiquinol-cytochrome-c reductase complex cytochrome b subunit</fullName>
    </alternativeName>
</protein>
<feature type="chain" id="PRO_0000060650" description="Cytochrome b">
    <location>
        <begin position="1" status="less than"/>
        <end position="214" status="greater than"/>
    </location>
</feature>
<feature type="transmembrane region" description="Helical" evidence="3">
    <location>
        <begin position="31"/>
        <end position="51"/>
    </location>
</feature>
<feature type="transmembrane region" description="Helical" evidence="2">
    <location>
        <begin position="75"/>
        <end position="96"/>
    </location>
</feature>
<feature type="transmembrane region" description="Helical" evidence="2">
    <location>
        <begin position="111"/>
        <end position="131"/>
    </location>
</feature>
<feature type="transmembrane region" description="Helical" evidence="3">
    <location>
        <begin position="176"/>
        <end position="196"/>
    </location>
</feature>
<feature type="binding site" description="axial binding residue" evidence="2">
    <location>
        <position position="81"/>
    </location>
    <ligand>
        <name>heme b</name>
        <dbReference type="ChEBI" id="CHEBI:60344"/>
        <label>b562</label>
    </ligand>
    <ligandPart>
        <name>Fe</name>
        <dbReference type="ChEBI" id="CHEBI:18248"/>
    </ligandPart>
</feature>
<feature type="binding site" description="axial binding residue" evidence="2">
    <location>
        <position position="95"/>
    </location>
    <ligand>
        <name>heme b</name>
        <dbReference type="ChEBI" id="CHEBI:60344"/>
        <label>b566</label>
    </ligand>
    <ligandPart>
        <name>Fe</name>
        <dbReference type="ChEBI" id="CHEBI:18248"/>
    </ligandPart>
</feature>
<feature type="binding site" description="axial binding residue" evidence="2">
    <location>
        <position position="180"/>
    </location>
    <ligand>
        <name>heme b</name>
        <dbReference type="ChEBI" id="CHEBI:60344"/>
        <label>b562</label>
    </ligand>
    <ligandPart>
        <name>Fe</name>
        <dbReference type="ChEBI" id="CHEBI:18248"/>
    </ligandPart>
</feature>
<feature type="binding site" description="axial binding residue" evidence="2">
    <location>
        <position position="194"/>
    </location>
    <ligand>
        <name>heme b</name>
        <dbReference type="ChEBI" id="CHEBI:60344"/>
        <label>b566</label>
    </ligand>
    <ligandPart>
        <name>Fe</name>
        <dbReference type="ChEBI" id="CHEBI:18248"/>
    </ligandPart>
</feature>
<feature type="binding site" evidence="2">
    <location>
        <position position="199"/>
    </location>
    <ligand>
        <name>a ubiquinone</name>
        <dbReference type="ChEBI" id="CHEBI:16389"/>
    </ligand>
</feature>
<feature type="non-terminal residue">
    <location>
        <position position="1"/>
    </location>
</feature>
<feature type="non-terminal residue">
    <location>
        <position position="214"/>
    </location>
</feature>
<organism>
    <name type="scientific">Atractaspis micropholis</name>
    <name type="common">Mole viper</name>
    <dbReference type="NCBI Taxonomy" id="55260"/>
    <lineage>
        <taxon>Eukaryota</taxon>
        <taxon>Metazoa</taxon>
        <taxon>Chordata</taxon>
        <taxon>Craniata</taxon>
        <taxon>Vertebrata</taxon>
        <taxon>Euteleostomi</taxon>
        <taxon>Lepidosauria</taxon>
        <taxon>Squamata</taxon>
        <taxon>Bifurcata</taxon>
        <taxon>Unidentata</taxon>
        <taxon>Episquamata</taxon>
        <taxon>Toxicofera</taxon>
        <taxon>Serpentes</taxon>
        <taxon>Colubroidea</taxon>
        <taxon>Lamprophiidae</taxon>
        <taxon>Atractaspidinae</taxon>
        <taxon>Atractaspis</taxon>
    </lineage>
</organism>
<evidence type="ECO:0000250" key="1"/>
<evidence type="ECO:0000250" key="2">
    <source>
        <dbReference type="UniProtKB" id="P00157"/>
    </source>
</evidence>
<evidence type="ECO:0000255" key="3">
    <source>
        <dbReference type="PROSITE-ProRule" id="PRU00968"/>
    </source>
</evidence>
<comment type="function">
    <text evidence="2">Component of the ubiquinol-cytochrome c reductase complex (complex III or cytochrome b-c1 complex) that is part of the mitochondrial respiratory chain. The b-c1 complex mediates electron transfer from ubiquinol to cytochrome c. Contributes to the generation of a proton gradient across the mitochondrial membrane that is then used for ATP synthesis.</text>
</comment>
<comment type="cofactor">
    <cofactor evidence="2">
        <name>heme b</name>
        <dbReference type="ChEBI" id="CHEBI:60344"/>
    </cofactor>
    <text evidence="2">Binds 2 heme b groups non-covalently.</text>
</comment>
<comment type="subunit">
    <text evidence="2">The cytochrome bc1 complex contains 3 respiratory subunits (MT-CYB, CYC1 and UQCRFS1), 2 core proteins (UQCRC1 and UQCRC2) and probably 6 low-molecular weight proteins.</text>
</comment>
<comment type="subcellular location">
    <subcellularLocation>
        <location evidence="2">Mitochondrion inner membrane</location>
        <topology evidence="2">Multi-pass membrane protein</topology>
    </subcellularLocation>
</comment>
<comment type="miscellaneous">
    <text evidence="1">Heme 1 (or BL or b562) is low-potential and absorbs at about 562 nm, and heme 2 (or BH or b566) is high-potential and absorbs at about 566 nm.</text>
</comment>
<comment type="similarity">
    <text evidence="3">Belongs to the cytochrome b family.</text>
</comment>
<comment type="caution">
    <text evidence="2">The full-length protein contains only eight transmembrane helices, not nine as predicted by bioinformatics tools.</text>
</comment>
<geneLocation type="mitochondrion"/>
<dbReference type="EMBL" id="AF039261">
    <property type="protein sequence ID" value="AAC33538.1"/>
    <property type="molecule type" value="Genomic_DNA"/>
</dbReference>
<dbReference type="GO" id="GO:0005743">
    <property type="term" value="C:mitochondrial inner membrane"/>
    <property type="evidence" value="ECO:0007669"/>
    <property type="project" value="UniProtKB-SubCell"/>
</dbReference>
<dbReference type="GO" id="GO:0046872">
    <property type="term" value="F:metal ion binding"/>
    <property type="evidence" value="ECO:0007669"/>
    <property type="project" value="UniProtKB-KW"/>
</dbReference>
<dbReference type="GO" id="GO:0008121">
    <property type="term" value="F:ubiquinol-cytochrome-c reductase activity"/>
    <property type="evidence" value="ECO:0007669"/>
    <property type="project" value="TreeGrafter"/>
</dbReference>
<dbReference type="GO" id="GO:0006122">
    <property type="term" value="P:mitochondrial electron transport, ubiquinol to cytochrome c"/>
    <property type="evidence" value="ECO:0007669"/>
    <property type="project" value="TreeGrafter"/>
</dbReference>
<dbReference type="CDD" id="cd00284">
    <property type="entry name" value="Cytochrome_b_N"/>
    <property type="match status" value="1"/>
</dbReference>
<dbReference type="Gene3D" id="1.20.810.10">
    <property type="entry name" value="Cytochrome Bc1 Complex, Chain C"/>
    <property type="match status" value="1"/>
</dbReference>
<dbReference type="InterPro" id="IPR005797">
    <property type="entry name" value="Cyt_b/b6_N"/>
</dbReference>
<dbReference type="InterPro" id="IPR027387">
    <property type="entry name" value="Cytb/b6-like_sf"/>
</dbReference>
<dbReference type="InterPro" id="IPR048259">
    <property type="entry name" value="Cytochrome_b_N_euk/bac"/>
</dbReference>
<dbReference type="InterPro" id="IPR016174">
    <property type="entry name" value="Di-haem_cyt_TM"/>
</dbReference>
<dbReference type="PANTHER" id="PTHR19271">
    <property type="entry name" value="CYTOCHROME B"/>
    <property type="match status" value="1"/>
</dbReference>
<dbReference type="PANTHER" id="PTHR19271:SF16">
    <property type="entry name" value="CYTOCHROME B"/>
    <property type="match status" value="1"/>
</dbReference>
<dbReference type="Pfam" id="PF00033">
    <property type="entry name" value="Cytochrome_B"/>
    <property type="match status" value="1"/>
</dbReference>
<dbReference type="SUPFAM" id="SSF81342">
    <property type="entry name" value="Transmembrane di-heme cytochromes"/>
    <property type="match status" value="1"/>
</dbReference>
<dbReference type="PROSITE" id="PS51002">
    <property type="entry name" value="CYTB_NTER"/>
    <property type="match status" value="1"/>
</dbReference>